<feature type="chain" id="PRO_1000114795" description="Imidazole glycerol phosphate synthase subunit HisH">
    <location>
        <begin position="1"/>
        <end position="218"/>
    </location>
</feature>
<feature type="domain" description="Glutamine amidotransferase type-1" evidence="1">
    <location>
        <begin position="5"/>
        <end position="213"/>
    </location>
</feature>
<feature type="active site" description="Nucleophile" evidence="1">
    <location>
        <position position="83"/>
    </location>
</feature>
<feature type="active site" evidence="1">
    <location>
        <position position="188"/>
    </location>
</feature>
<feature type="active site" evidence="1">
    <location>
        <position position="190"/>
    </location>
</feature>
<evidence type="ECO:0000255" key="1">
    <source>
        <dbReference type="HAMAP-Rule" id="MF_00278"/>
    </source>
</evidence>
<sequence>MGAVRLAVIDYEAGNLHSACKGLERAGAEVQLVTEPTGLAAFDGIVLPGDGAFDPAMQQLRARGFGKAIREAVERQQPFLGICLGLQVLFESSEEGTEPGLSIVPGRVQRFRPEAGLRIPHMGWNQLQLTQAHSPLWAGIPDQTWAYFVHSYHGVPSDPAWVAATTQHGSQTCVAAIARGALFATQFHPEKSGPYGLKMLRNFVEFVARCSPLSAPRA</sequence>
<reference key="1">
    <citation type="journal article" date="2007" name="ISME J.">
        <title>Population level functional diversity in a microbial community revealed by comparative genomic and metagenomic analyses.</title>
        <authorList>
            <person name="Bhaya D."/>
            <person name="Grossman A.R."/>
            <person name="Steunou A.-S."/>
            <person name="Khuri N."/>
            <person name="Cohan F.M."/>
            <person name="Hamamura N."/>
            <person name="Melendrez M.C."/>
            <person name="Bateson M.M."/>
            <person name="Ward D.M."/>
            <person name="Heidelberg J.F."/>
        </authorList>
    </citation>
    <scope>NUCLEOTIDE SEQUENCE [LARGE SCALE GENOMIC DNA]</scope>
    <source>
        <strain>JA-2-3B'a(2-13)</strain>
    </source>
</reference>
<protein>
    <recommendedName>
        <fullName evidence="1">Imidazole glycerol phosphate synthase subunit HisH</fullName>
        <ecNumber evidence="1">4.3.2.10</ecNumber>
    </recommendedName>
    <alternativeName>
        <fullName evidence="1">IGP synthase glutaminase subunit</fullName>
        <ecNumber evidence="1">3.5.1.2</ecNumber>
    </alternativeName>
    <alternativeName>
        <fullName evidence="1">IGP synthase subunit HisH</fullName>
    </alternativeName>
    <alternativeName>
        <fullName evidence="1">ImGP synthase subunit HisH</fullName>
        <shortName evidence="1">IGPS subunit HisH</shortName>
    </alternativeName>
</protein>
<keyword id="KW-0028">Amino-acid biosynthesis</keyword>
<keyword id="KW-0963">Cytoplasm</keyword>
<keyword id="KW-0315">Glutamine amidotransferase</keyword>
<keyword id="KW-0368">Histidine biosynthesis</keyword>
<keyword id="KW-0378">Hydrolase</keyword>
<keyword id="KW-0456">Lyase</keyword>
<keyword id="KW-1185">Reference proteome</keyword>
<comment type="function">
    <text evidence="1">IGPS catalyzes the conversion of PRFAR and glutamine to IGP, AICAR and glutamate. The HisH subunit catalyzes the hydrolysis of glutamine to glutamate and ammonia as part of the synthesis of IGP and AICAR. The resulting ammonia molecule is channeled to the active site of HisF.</text>
</comment>
<comment type="catalytic activity">
    <reaction evidence="1">
        <text>5-[(5-phospho-1-deoxy-D-ribulos-1-ylimino)methylamino]-1-(5-phospho-beta-D-ribosyl)imidazole-4-carboxamide + L-glutamine = D-erythro-1-(imidazol-4-yl)glycerol 3-phosphate + 5-amino-1-(5-phospho-beta-D-ribosyl)imidazole-4-carboxamide + L-glutamate + H(+)</text>
        <dbReference type="Rhea" id="RHEA:24793"/>
        <dbReference type="ChEBI" id="CHEBI:15378"/>
        <dbReference type="ChEBI" id="CHEBI:29985"/>
        <dbReference type="ChEBI" id="CHEBI:58278"/>
        <dbReference type="ChEBI" id="CHEBI:58359"/>
        <dbReference type="ChEBI" id="CHEBI:58475"/>
        <dbReference type="ChEBI" id="CHEBI:58525"/>
        <dbReference type="EC" id="4.3.2.10"/>
    </reaction>
</comment>
<comment type="catalytic activity">
    <reaction evidence="1">
        <text>L-glutamine + H2O = L-glutamate + NH4(+)</text>
        <dbReference type="Rhea" id="RHEA:15889"/>
        <dbReference type="ChEBI" id="CHEBI:15377"/>
        <dbReference type="ChEBI" id="CHEBI:28938"/>
        <dbReference type="ChEBI" id="CHEBI:29985"/>
        <dbReference type="ChEBI" id="CHEBI:58359"/>
        <dbReference type="EC" id="3.5.1.2"/>
    </reaction>
</comment>
<comment type="pathway">
    <text evidence="1">Amino-acid biosynthesis; L-histidine biosynthesis; L-histidine from 5-phospho-alpha-D-ribose 1-diphosphate: step 5/9.</text>
</comment>
<comment type="subunit">
    <text evidence="1">Heterodimer of HisH and HisF.</text>
</comment>
<comment type="subcellular location">
    <subcellularLocation>
        <location evidence="1">Cytoplasm</location>
    </subcellularLocation>
</comment>
<name>HIS5_SYNJB</name>
<gene>
    <name evidence="1" type="primary">hisH</name>
    <name type="ordered locus">CYB_0889</name>
</gene>
<accession>Q2JN09</accession>
<organism>
    <name type="scientific">Synechococcus sp. (strain JA-2-3B'a(2-13))</name>
    <name type="common">Cyanobacteria bacterium Yellowstone B-Prime</name>
    <dbReference type="NCBI Taxonomy" id="321332"/>
    <lineage>
        <taxon>Bacteria</taxon>
        <taxon>Bacillati</taxon>
        <taxon>Cyanobacteriota</taxon>
        <taxon>Cyanophyceae</taxon>
        <taxon>Synechococcales</taxon>
        <taxon>Synechococcaceae</taxon>
        <taxon>Synechococcus</taxon>
    </lineage>
</organism>
<proteinExistence type="inferred from homology"/>
<dbReference type="EC" id="4.3.2.10" evidence="1"/>
<dbReference type="EC" id="3.5.1.2" evidence="1"/>
<dbReference type="EMBL" id="CP000240">
    <property type="protein sequence ID" value="ABD01868.1"/>
    <property type="molecule type" value="Genomic_DNA"/>
</dbReference>
<dbReference type="RefSeq" id="WP_011432524.1">
    <property type="nucleotide sequence ID" value="NC_007776.1"/>
</dbReference>
<dbReference type="SMR" id="Q2JN09"/>
<dbReference type="STRING" id="321332.CYB_0889"/>
<dbReference type="KEGG" id="cyb:CYB_0889"/>
<dbReference type="eggNOG" id="COG0118">
    <property type="taxonomic scope" value="Bacteria"/>
</dbReference>
<dbReference type="HOGENOM" id="CLU_071837_2_2_3"/>
<dbReference type="OrthoDB" id="9807137at2"/>
<dbReference type="UniPathway" id="UPA00031">
    <property type="reaction ID" value="UER00010"/>
</dbReference>
<dbReference type="Proteomes" id="UP000001938">
    <property type="component" value="Chromosome"/>
</dbReference>
<dbReference type="GO" id="GO:0005737">
    <property type="term" value="C:cytoplasm"/>
    <property type="evidence" value="ECO:0007669"/>
    <property type="project" value="UniProtKB-SubCell"/>
</dbReference>
<dbReference type="GO" id="GO:0004359">
    <property type="term" value="F:glutaminase activity"/>
    <property type="evidence" value="ECO:0007669"/>
    <property type="project" value="UniProtKB-EC"/>
</dbReference>
<dbReference type="GO" id="GO:0000107">
    <property type="term" value="F:imidazoleglycerol-phosphate synthase activity"/>
    <property type="evidence" value="ECO:0007669"/>
    <property type="project" value="UniProtKB-UniRule"/>
</dbReference>
<dbReference type="GO" id="GO:0016829">
    <property type="term" value="F:lyase activity"/>
    <property type="evidence" value="ECO:0007669"/>
    <property type="project" value="UniProtKB-KW"/>
</dbReference>
<dbReference type="GO" id="GO:0000105">
    <property type="term" value="P:L-histidine biosynthetic process"/>
    <property type="evidence" value="ECO:0007669"/>
    <property type="project" value="UniProtKB-UniRule"/>
</dbReference>
<dbReference type="CDD" id="cd01748">
    <property type="entry name" value="GATase1_IGP_Synthase"/>
    <property type="match status" value="1"/>
</dbReference>
<dbReference type="Gene3D" id="3.40.50.880">
    <property type="match status" value="1"/>
</dbReference>
<dbReference type="HAMAP" id="MF_00278">
    <property type="entry name" value="HisH"/>
    <property type="match status" value="1"/>
</dbReference>
<dbReference type="InterPro" id="IPR029062">
    <property type="entry name" value="Class_I_gatase-like"/>
</dbReference>
<dbReference type="InterPro" id="IPR017926">
    <property type="entry name" value="GATASE"/>
</dbReference>
<dbReference type="InterPro" id="IPR010139">
    <property type="entry name" value="Imidazole-glycPsynth_HisH"/>
</dbReference>
<dbReference type="NCBIfam" id="TIGR01855">
    <property type="entry name" value="IMP_synth_hisH"/>
    <property type="match status" value="1"/>
</dbReference>
<dbReference type="PANTHER" id="PTHR42701">
    <property type="entry name" value="IMIDAZOLE GLYCEROL PHOSPHATE SYNTHASE SUBUNIT HISH"/>
    <property type="match status" value="1"/>
</dbReference>
<dbReference type="PANTHER" id="PTHR42701:SF1">
    <property type="entry name" value="IMIDAZOLE GLYCEROL PHOSPHATE SYNTHASE SUBUNIT HISH"/>
    <property type="match status" value="1"/>
</dbReference>
<dbReference type="Pfam" id="PF00117">
    <property type="entry name" value="GATase"/>
    <property type="match status" value="1"/>
</dbReference>
<dbReference type="PIRSF" id="PIRSF000495">
    <property type="entry name" value="Amidotransf_hisH"/>
    <property type="match status" value="1"/>
</dbReference>
<dbReference type="SUPFAM" id="SSF52317">
    <property type="entry name" value="Class I glutamine amidotransferase-like"/>
    <property type="match status" value="1"/>
</dbReference>
<dbReference type="PROSITE" id="PS51273">
    <property type="entry name" value="GATASE_TYPE_1"/>
    <property type="match status" value="1"/>
</dbReference>